<sequence length="87" mass="10079">MVNMKASMFLTSAGLVPLFVVCYASESEEKEFPKEMLSSIFAVDNDFKQEERDCAGYMRECKEKLCCSGYVCSSRWKWCVLPAPWRR</sequence>
<name>H8A13_CYRHA</name>
<proteinExistence type="evidence at protein level"/>
<keyword id="KW-0903">Direct protein sequencing</keyword>
<keyword id="KW-1015">Disulfide bond</keyword>
<keyword id="KW-0872">Ion channel impairing toxin</keyword>
<keyword id="KW-0960">Knottin</keyword>
<keyword id="KW-0964">Secreted</keyword>
<keyword id="KW-0732">Signal</keyword>
<keyword id="KW-0800">Toxin</keyword>
<comment type="function">
    <text evidence="1">Ion channel inhibitor.</text>
</comment>
<comment type="subcellular location">
    <subcellularLocation>
        <location>Secreted</location>
    </subcellularLocation>
</comment>
<comment type="tissue specificity">
    <text>Expressed by the venom gland.</text>
</comment>
<comment type="domain">
    <text evidence="1">The presence of a 'disulfide through disulfide knot' structurally defines this protein as a knottin.</text>
</comment>
<comment type="similarity">
    <text evidence="5">Belongs to the neurotoxin 10 (Hwtx-1) family. 51 (Hntx-8) subfamily. Hntx-8 sub-subfamily.</text>
</comment>
<feature type="signal peptide" evidence="3">
    <location>
        <begin position="1"/>
        <end position="24"/>
    </location>
</feature>
<feature type="propeptide" id="PRO_0000400603" evidence="4">
    <location>
        <begin position="25"/>
        <end position="52"/>
    </location>
</feature>
<feature type="peptide" id="PRO_0000400604" description="U3-theraphotoxin-Hhn1a 13">
    <location>
        <begin position="53"/>
        <end position="87"/>
    </location>
</feature>
<feature type="disulfide bond" evidence="2">
    <location>
        <begin position="54"/>
        <end position="67"/>
    </location>
</feature>
<feature type="disulfide bond" evidence="2">
    <location>
        <begin position="61"/>
        <end position="72"/>
    </location>
</feature>
<feature type="disulfide bond" evidence="2">
    <location>
        <begin position="66"/>
        <end position="79"/>
    </location>
</feature>
<evidence type="ECO:0000250" key="1"/>
<evidence type="ECO:0000250" key="2">
    <source>
        <dbReference type="UniProtKB" id="B3FIS6"/>
    </source>
</evidence>
<evidence type="ECO:0000255" key="3"/>
<evidence type="ECO:0000269" key="4">
    <source>
    </source>
</evidence>
<evidence type="ECO:0000305" key="5"/>
<accession>D2Y2M4</accession>
<protein>
    <recommendedName>
        <fullName>U3-theraphotoxin-Hhn1a 13</fullName>
        <shortName>U3-TRTX-Hhn1a</shortName>
    </recommendedName>
    <alternativeName>
        <fullName>Hainantoxin-VIII.13</fullName>
        <shortName>HNTX-VIII.13</shortName>
    </alternativeName>
    <alternativeName>
        <fullName>Peptide F4-27.90</fullName>
    </alternativeName>
</protein>
<organism>
    <name type="scientific">Cyriopagopus hainanus</name>
    <name type="common">Chinese bird spider</name>
    <name type="synonym">Haplopelma hainanum</name>
    <dbReference type="NCBI Taxonomy" id="209901"/>
    <lineage>
        <taxon>Eukaryota</taxon>
        <taxon>Metazoa</taxon>
        <taxon>Ecdysozoa</taxon>
        <taxon>Arthropoda</taxon>
        <taxon>Chelicerata</taxon>
        <taxon>Arachnida</taxon>
        <taxon>Araneae</taxon>
        <taxon>Mygalomorphae</taxon>
        <taxon>Theraphosidae</taxon>
        <taxon>Haplopelma</taxon>
    </lineage>
</organism>
<reference key="1">
    <citation type="journal article" date="2010" name="J. Proteome Res.">
        <title>Molecular diversification of peptide toxins from the tarantula Haplopelma hainanum (Ornithoctonus hainana) venom based on transcriptomic, peptidomic, and genomic analyses.</title>
        <authorList>
            <person name="Tang X."/>
            <person name="Zhang Y."/>
            <person name="Hu W."/>
            <person name="Xu D."/>
            <person name="Tao H."/>
            <person name="Yang X."/>
            <person name="Li Y."/>
            <person name="Jiang L."/>
            <person name="Liang S."/>
        </authorList>
    </citation>
    <scope>NUCLEOTIDE SEQUENCE [LARGE SCALE GENOMIC DNA]</scope>
    <scope>PROTEIN SEQUENCE OF 53-85</scope>
    <scope>IDENTIFICATION BY MASS SPECTROMETRY</scope>
    <source>
        <tissue>Venom</tissue>
        <tissue>Venom gland</tissue>
    </source>
</reference>
<dbReference type="EMBL" id="GU293101">
    <property type="protein sequence ID" value="ADB56917.1"/>
    <property type="molecule type" value="Genomic_DNA"/>
</dbReference>
<dbReference type="SMR" id="D2Y2M4"/>
<dbReference type="ArachnoServer" id="AS001657">
    <property type="toxin name" value="U3-theraphotoxin-Hhn1a"/>
</dbReference>
<dbReference type="GO" id="GO:0005576">
    <property type="term" value="C:extracellular region"/>
    <property type="evidence" value="ECO:0007669"/>
    <property type="project" value="UniProtKB-SubCell"/>
</dbReference>
<dbReference type="GO" id="GO:0008200">
    <property type="term" value="F:ion channel inhibitor activity"/>
    <property type="evidence" value="ECO:0007669"/>
    <property type="project" value="InterPro"/>
</dbReference>
<dbReference type="GO" id="GO:0090729">
    <property type="term" value="F:toxin activity"/>
    <property type="evidence" value="ECO:0007669"/>
    <property type="project" value="UniProtKB-KW"/>
</dbReference>
<dbReference type="InterPro" id="IPR011696">
    <property type="entry name" value="Huwentoxin-1"/>
</dbReference>
<dbReference type="InterPro" id="IPR013140">
    <property type="entry name" value="Huwentoxin_CS1"/>
</dbReference>
<dbReference type="Pfam" id="PF07740">
    <property type="entry name" value="Toxin_12"/>
    <property type="match status" value="1"/>
</dbReference>
<dbReference type="SUPFAM" id="SSF57059">
    <property type="entry name" value="omega toxin-like"/>
    <property type="match status" value="1"/>
</dbReference>
<dbReference type="PROSITE" id="PS60021">
    <property type="entry name" value="HWTX_1"/>
    <property type="match status" value="1"/>
</dbReference>